<keyword id="KW-0240">DNA-directed RNA polymerase</keyword>
<keyword id="KW-0548">Nucleotidyltransferase</keyword>
<keyword id="KW-0804">Transcription</keyword>
<keyword id="KW-0808">Transferase</keyword>
<name>RPOB_RICRO</name>
<comment type="function">
    <text evidence="1">DNA-dependent RNA polymerase catalyzes the transcription of DNA into RNA using the four ribonucleoside triphosphates as substrates.</text>
</comment>
<comment type="catalytic activity">
    <reaction evidence="1">
        <text>RNA(n) + a ribonucleoside 5'-triphosphate = RNA(n+1) + diphosphate</text>
        <dbReference type="Rhea" id="RHEA:21248"/>
        <dbReference type="Rhea" id="RHEA-COMP:14527"/>
        <dbReference type="Rhea" id="RHEA-COMP:17342"/>
        <dbReference type="ChEBI" id="CHEBI:33019"/>
        <dbReference type="ChEBI" id="CHEBI:61557"/>
        <dbReference type="ChEBI" id="CHEBI:140395"/>
        <dbReference type="EC" id="2.7.7.6"/>
    </reaction>
</comment>
<comment type="subunit">
    <text evidence="1">The RNAP catalytic core consists of 2 alpha, 1 beta, 1 beta' and 1 omega subunit. When a sigma factor is associated with the core the holoenzyme is formed, which can initiate transcription.</text>
</comment>
<comment type="similarity">
    <text evidence="1">Belongs to the RNA polymerase beta chain family.</text>
</comment>
<evidence type="ECO:0000255" key="1">
    <source>
        <dbReference type="HAMAP-Rule" id="MF_01321"/>
    </source>
</evidence>
<protein>
    <recommendedName>
        <fullName evidence="1">DNA-directed RNA polymerase subunit beta</fullName>
        <shortName evidence="1">RNAP subunit beta</shortName>
        <ecNumber evidence="1">2.7.7.6</ecNumber>
    </recommendedName>
    <alternativeName>
        <fullName evidence="1">RNA polymerase subunit beta</fullName>
    </alternativeName>
    <alternativeName>
        <fullName evidence="1">Transcriptase subunit beta</fullName>
    </alternativeName>
</protein>
<gene>
    <name evidence="1" type="primary">rpoB</name>
    <name type="ordered locus">RrIowa_0223</name>
</gene>
<sequence length="1373" mass="154258">MVSLRDNIEAQPLSHNRRIRKNFGHINLVADIPNLIEIQKNSYEKNFLQLNIKDSERKNKGLQSILNSIFPISDSSNVANLEFVKYEFDTPKYDVEECSQRSLSYAAPLKVTLRLSIWDIDEDTGTREIKGIKEQEVYMGDIPLMTKNGTFIINGTERVVVSQMHRSPGVFFYHDEGKVHSSGKLLYSARVIPYRGSWLDLEFDAKDVIYFRIDRKRKLYATTLLRAIGMSTEEIIKFYYNSVTYKLVKNKGWAVKFIPQHITAHRLTSDLVDADTGNILLKAGQKITPRLAKKYFGEGLNNILVAHETLIGKYLSEDLRDPASDEVLAKIGEMITADMLNVINDLKIKNVNVLVINPQSGPYIRNTLFADKNQDREAALCDIFRVLRPGEPANIEAAESLFYNLFFDTERYDLSEVGRIKMNSRLELNISEEVTVLTIDDIKNIVRVLVELKDGKGIIDDIDHLGNRRVRSVGELIENQFRIGLVRMEKSVIERMSAGDVDTVMPHDLVNSKILVSVVKEFFSTSQLSQFMDQTNPLSEITHKRRLSALGPGGLSRDRAGFEVRDVHPTHYGRICPIETPEGQNIGLINSMATYARINKHGFIESPYRRVKDGCVTDEVVYLSAIEEGKYKIGQANSKINKDGKLQGEFINCRVEGGNFVMVEPYEVDFIDVTPMQVVSVAASLIPFLENDDANRALMGSNMQRQAVPLIKTDAPFVGTGVEGVVAKDSGASVLALHDGIVEQVDSNRIVIRTLEQKVDGSPSVDIYNLLKFQKSNHNTCINQKPLVKVGHYVKKNDIIADGPSTDNGEIALGRNVLVAFLPWNGYNFEDSILISERIVKEDVFTSIHIEEFEVIARDTRLGPEEITRDIPNVSEEALRHLDEVGIIYIGAEVKAGDILVGKVTPKSESPITPEEKLLRAIFGEKAFDVKDSSLHVPSGVSGTVVEVRVFSRRGVEKDQRAIAIEKQQIEKFAKDRDDELEIIEHFVFSWLEKLLVGQVIINGPKQVKVGQTITTEMLKGLSKGQFWQITVEDANVMNEIEQIKTHYDEKKEALDKRFATKVEKLQSGDDLPQGALKVVKVFIATKHKLQPGDKMAGRHGNKGVISRIVPEEDMPFLEDGTVVDIVLNPLGLPSRMNIGQILETHLGWASINLAKKISTLVKEYKNKHIGIEQIKKFLIELYGENINSILERPEEEIIAFCKKVSKGVHFATPVFDGAKVQDVKDMLKLAGQDPSGQVKLIDGRTGEYFDRLVTVGQKYLLKLHHLVDNKIHSRSIGPYSLVTQQPLGGKSHFGGQRFGEMECWALQAYGAAYTLQEMLTVKSDDVNGRIKTYDSIVRGENNFESGIPESFNVMIKEFRSLCLNVKLEVTSS</sequence>
<accession>B0BWA9</accession>
<reference key="1">
    <citation type="journal article" date="2008" name="Infect. Immun.">
        <title>Genomic comparison of virulent Rickettsia rickettsii Sheila Smith and avirulent Rickettsia rickettsii Iowa.</title>
        <authorList>
            <person name="Ellison D.W."/>
            <person name="Clark T.R."/>
            <person name="Sturdevant D.E."/>
            <person name="Virtaneva K."/>
            <person name="Porcella S.F."/>
            <person name="Hackstadt T."/>
        </authorList>
    </citation>
    <scope>NUCLEOTIDE SEQUENCE [LARGE SCALE GENOMIC DNA]</scope>
    <source>
        <strain>Iowa</strain>
    </source>
</reference>
<proteinExistence type="inferred from homology"/>
<organism>
    <name type="scientific">Rickettsia rickettsii (strain Iowa)</name>
    <dbReference type="NCBI Taxonomy" id="452659"/>
    <lineage>
        <taxon>Bacteria</taxon>
        <taxon>Pseudomonadati</taxon>
        <taxon>Pseudomonadota</taxon>
        <taxon>Alphaproteobacteria</taxon>
        <taxon>Rickettsiales</taxon>
        <taxon>Rickettsiaceae</taxon>
        <taxon>Rickettsieae</taxon>
        <taxon>Rickettsia</taxon>
        <taxon>spotted fever group</taxon>
    </lineage>
</organism>
<feature type="chain" id="PRO_1000086379" description="DNA-directed RNA polymerase subunit beta">
    <location>
        <begin position="1"/>
        <end position="1373"/>
    </location>
</feature>
<dbReference type="EC" id="2.7.7.6" evidence="1"/>
<dbReference type="EMBL" id="CP000766">
    <property type="protein sequence ID" value="ABY72135.1"/>
    <property type="molecule type" value="Genomic_DNA"/>
</dbReference>
<dbReference type="RefSeq" id="WP_012150397.1">
    <property type="nucleotide sequence ID" value="NC_010263.3"/>
</dbReference>
<dbReference type="SMR" id="B0BWA9"/>
<dbReference type="GeneID" id="79936973"/>
<dbReference type="KEGG" id="rrj:RrIowa_0223"/>
<dbReference type="eggNOG" id="COG0085">
    <property type="taxonomic scope" value="Bacteria"/>
</dbReference>
<dbReference type="HOGENOM" id="CLU_000524_4_0_5"/>
<dbReference type="Proteomes" id="UP000000796">
    <property type="component" value="Chromosome"/>
</dbReference>
<dbReference type="GO" id="GO:0000428">
    <property type="term" value="C:DNA-directed RNA polymerase complex"/>
    <property type="evidence" value="ECO:0007669"/>
    <property type="project" value="UniProtKB-KW"/>
</dbReference>
<dbReference type="GO" id="GO:0003677">
    <property type="term" value="F:DNA binding"/>
    <property type="evidence" value="ECO:0007669"/>
    <property type="project" value="UniProtKB-UniRule"/>
</dbReference>
<dbReference type="GO" id="GO:0003899">
    <property type="term" value="F:DNA-directed RNA polymerase activity"/>
    <property type="evidence" value="ECO:0007669"/>
    <property type="project" value="UniProtKB-UniRule"/>
</dbReference>
<dbReference type="GO" id="GO:0032549">
    <property type="term" value="F:ribonucleoside binding"/>
    <property type="evidence" value="ECO:0007669"/>
    <property type="project" value="InterPro"/>
</dbReference>
<dbReference type="GO" id="GO:0006351">
    <property type="term" value="P:DNA-templated transcription"/>
    <property type="evidence" value="ECO:0007669"/>
    <property type="project" value="UniProtKB-UniRule"/>
</dbReference>
<dbReference type="CDD" id="cd00653">
    <property type="entry name" value="RNA_pol_B_RPB2"/>
    <property type="match status" value="1"/>
</dbReference>
<dbReference type="Gene3D" id="2.40.50.100">
    <property type="match status" value="1"/>
</dbReference>
<dbReference type="Gene3D" id="2.40.50.150">
    <property type="match status" value="1"/>
</dbReference>
<dbReference type="Gene3D" id="3.90.1100.10">
    <property type="match status" value="2"/>
</dbReference>
<dbReference type="Gene3D" id="2.30.150.10">
    <property type="entry name" value="DNA-directed RNA polymerase, beta subunit, external 1 domain"/>
    <property type="match status" value="1"/>
</dbReference>
<dbReference type="Gene3D" id="2.40.270.10">
    <property type="entry name" value="DNA-directed RNA polymerase, subunit 2, domain 6"/>
    <property type="match status" value="1"/>
</dbReference>
<dbReference type="Gene3D" id="3.90.1800.10">
    <property type="entry name" value="RNA polymerase alpha subunit dimerisation domain"/>
    <property type="match status" value="1"/>
</dbReference>
<dbReference type="HAMAP" id="MF_01321">
    <property type="entry name" value="RNApol_bact_RpoB"/>
    <property type="match status" value="1"/>
</dbReference>
<dbReference type="InterPro" id="IPR042107">
    <property type="entry name" value="DNA-dir_RNA_pol_bsu_ext_1_sf"/>
</dbReference>
<dbReference type="InterPro" id="IPR019462">
    <property type="entry name" value="DNA-dir_RNA_pol_bsu_external_1"/>
</dbReference>
<dbReference type="InterPro" id="IPR015712">
    <property type="entry name" value="DNA-dir_RNA_pol_su2"/>
</dbReference>
<dbReference type="InterPro" id="IPR007120">
    <property type="entry name" value="DNA-dir_RNAP_su2_dom"/>
</dbReference>
<dbReference type="InterPro" id="IPR037033">
    <property type="entry name" value="DNA-dir_RNAP_su2_hyb_sf"/>
</dbReference>
<dbReference type="InterPro" id="IPR010243">
    <property type="entry name" value="RNA_pol_bsu_bac"/>
</dbReference>
<dbReference type="InterPro" id="IPR007121">
    <property type="entry name" value="RNA_pol_bsu_CS"/>
</dbReference>
<dbReference type="InterPro" id="IPR007644">
    <property type="entry name" value="RNA_pol_bsu_protrusion"/>
</dbReference>
<dbReference type="InterPro" id="IPR007642">
    <property type="entry name" value="RNA_pol_Rpb2_2"/>
</dbReference>
<dbReference type="InterPro" id="IPR007645">
    <property type="entry name" value="RNA_pol_Rpb2_3"/>
</dbReference>
<dbReference type="InterPro" id="IPR007641">
    <property type="entry name" value="RNA_pol_Rpb2_7"/>
</dbReference>
<dbReference type="InterPro" id="IPR014724">
    <property type="entry name" value="RNA_pol_RPB2_OB-fold"/>
</dbReference>
<dbReference type="NCBIfam" id="NF001616">
    <property type="entry name" value="PRK00405.1"/>
    <property type="match status" value="1"/>
</dbReference>
<dbReference type="NCBIfam" id="TIGR02013">
    <property type="entry name" value="rpoB"/>
    <property type="match status" value="1"/>
</dbReference>
<dbReference type="PANTHER" id="PTHR20856">
    <property type="entry name" value="DNA-DIRECTED RNA POLYMERASE I SUBUNIT 2"/>
    <property type="match status" value="1"/>
</dbReference>
<dbReference type="Pfam" id="PF04563">
    <property type="entry name" value="RNA_pol_Rpb2_1"/>
    <property type="match status" value="1"/>
</dbReference>
<dbReference type="Pfam" id="PF04561">
    <property type="entry name" value="RNA_pol_Rpb2_2"/>
    <property type="match status" value="1"/>
</dbReference>
<dbReference type="Pfam" id="PF04565">
    <property type="entry name" value="RNA_pol_Rpb2_3"/>
    <property type="match status" value="1"/>
</dbReference>
<dbReference type="Pfam" id="PF10385">
    <property type="entry name" value="RNA_pol_Rpb2_45"/>
    <property type="match status" value="1"/>
</dbReference>
<dbReference type="Pfam" id="PF00562">
    <property type="entry name" value="RNA_pol_Rpb2_6"/>
    <property type="match status" value="1"/>
</dbReference>
<dbReference type="Pfam" id="PF04560">
    <property type="entry name" value="RNA_pol_Rpb2_7"/>
    <property type="match status" value="1"/>
</dbReference>
<dbReference type="SUPFAM" id="SSF64484">
    <property type="entry name" value="beta and beta-prime subunits of DNA dependent RNA-polymerase"/>
    <property type="match status" value="1"/>
</dbReference>
<dbReference type="PROSITE" id="PS01166">
    <property type="entry name" value="RNA_POL_BETA"/>
    <property type="match status" value="1"/>
</dbReference>